<comment type="function">
    <text evidence="1">Involved in the import of GDP-mannose from the cytoplasm into the Golgi lumen.</text>
</comment>
<comment type="subunit">
    <text evidence="1">Homooligomer.</text>
</comment>
<comment type="subcellular location">
    <subcellularLocation>
        <location evidence="1">Golgi apparatus membrane</location>
        <topology evidence="1">Multi-pass membrane protein</topology>
    </subcellularLocation>
    <subcellularLocation>
        <location evidence="1">Cytoplasmic vesicle membrane</location>
        <topology evidence="1">Multi-pass membrane protein</topology>
    </subcellularLocation>
    <subcellularLocation>
        <location evidence="1">Endoplasmic reticulum membrane</location>
        <topology evidence="1">Multi-pass membrane protein</topology>
    </subcellularLocation>
</comment>
<comment type="similarity">
    <text evidence="3">Belongs to the TPT transporter family. SLC35D subfamily.</text>
</comment>
<comment type="sequence caution" evidence="3">
    <conflict type="erroneous gene model prediction">
        <sequence resource="EMBL-CDS" id="EAQ90931"/>
    </conflict>
</comment>
<sequence length="394" mass="42705">MSNKKNEDIEMRAVEGANDFGGEKDPFLGRNSPVLRPRGREPTASAYFGKLDNSPGASIIAYCLSSISMTVVNKYVVSGESWNLNFFYLGVQSLVCTIAILLSRQTGLIKNLAPFDSNKAKRWFPVSLLLVSMIYTGANALQYLSVPVYTIFKNLTIIVIAYGEVLWFGGSVTPLMLLSFGLMVLSSVVAAWADIQAAIDGVGHSAETSAALATLNAGYAWMGLNVVCTSSYLLGMRKVIKKMNFKDYDSMFYNNLLTIPVLVVCSLLVEDWSSENLAKNFPIETRNKLMVGMIYSGLAAIFISYCSAWCIRVTSSTTYSMVGALNKLPIAISGLIFFDAPITFGSITAIAVGFVSGLVFAWAKVRQKAQEAGLLPTTKPTMSASAQSNRDANS</sequence>
<name>GMT_CHAGB</name>
<dbReference type="EMBL" id="CH408030">
    <property type="protein sequence ID" value="EAQ90931.1"/>
    <property type="status" value="ALT_SEQ"/>
    <property type="molecule type" value="Genomic_DNA"/>
</dbReference>
<dbReference type="RefSeq" id="XP_001229382.1">
    <property type="nucleotide sequence ID" value="XM_001229381.1"/>
</dbReference>
<dbReference type="SMR" id="Q2HA88"/>
<dbReference type="FunCoup" id="Q2HA88">
    <property type="interactions" value="509"/>
</dbReference>
<dbReference type="STRING" id="306901.Q2HA88"/>
<dbReference type="GeneID" id="4389796"/>
<dbReference type="VEuPathDB" id="FungiDB:CHGG_02866"/>
<dbReference type="eggNOG" id="KOG1444">
    <property type="taxonomic scope" value="Eukaryota"/>
</dbReference>
<dbReference type="HOGENOM" id="CLU_025360_1_2_1"/>
<dbReference type="InParanoid" id="Q2HA88"/>
<dbReference type="OrthoDB" id="417037at2759"/>
<dbReference type="Proteomes" id="UP000001056">
    <property type="component" value="Unassembled WGS sequence"/>
</dbReference>
<dbReference type="GO" id="GO:0030659">
    <property type="term" value="C:cytoplasmic vesicle membrane"/>
    <property type="evidence" value="ECO:0007669"/>
    <property type="project" value="UniProtKB-SubCell"/>
</dbReference>
<dbReference type="GO" id="GO:0005789">
    <property type="term" value="C:endoplasmic reticulum membrane"/>
    <property type="evidence" value="ECO:0007669"/>
    <property type="project" value="UniProtKB-SubCell"/>
</dbReference>
<dbReference type="GO" id="GO:0000139">
    <property type="term" value="C:Golgi membrane"/>
    <property type="evidence" value="ECO:0007669"/>
    <property type="project" value="UniProtKB-SubCell"/>
</dbReference>
<dbReference type="InterPro" id="IPR050186">
    <property type="entry name" value="TPT_transporter"/>
</dbReference>
<dbReference type="NCBIfam" id="TIGR00803">
    <property type="entry name" value="nst"/>
    <property type="match status" value="1"/>
</dbReference>
<dbReference type="PANTHER" id="PTHR11132">
    <property type="entry name" value="SOLUTE CARRIER FAMILY 35"/>
    <property type="match status" value="1"/>
</dbReference>
<dbReference type="SUPFAM" id="SSF103481">
    <property type="entry name" value="Multidrug resistance efflux transporter EmrE"/>
    <property type="match status" value="1"/>
</dbReference>
<feature type="chain" id="PRO_0000333517" description="GDP-mannose transporter">
    <location>
        <begin position="1"/>
        <end position="394"/>
    </location>
</feature>
<feature type="topological domain" description="Cytoplasmic" evidence="1">
    <location>
        <begin position="1"/>
        <end position="56"/>
    </location>
</feature>
<feature type="transmembrane region" description="Helical" evidence="2">
    <location>
        <begin position="57"/>
        <end position="77"/>
    </location>
</feature>
<feature type="topological domain" description="Lumenal" evidence="1">
    <location>
        <begin position="78"/>
        <end position="81"/>
    </location>
</feature>
<feature type="transmembrane region" description="Helical" evidence="2">
    <location>
        <begin position="82"/>
        <end position="102"/>
    </location>
</feature>
<feature type="topological domain" description="Cytoplasmic" evidence="1">
    <location>
        <begin position="103"/>
        <end position="122"/>
    </location>
</feature>
<feature type="transmembrane region" description="Helical" evidence="2">
    <location>
        <begin position="123"/>
        <end position="145"/>
    </location>
</feature>
<feature type="topological domain" description="Lumenal" evidence="1">
    <location>
        <begin position="146"/>
        <end position="150"/>
    </location>
</feature>
<feature type="transmembrane region" description="Helical" evidence="2">
    <location>
        <begin position="151"/>
        <end position="168"/>
    </location>
</feature>
<feature type="topological domain" description="Cytoplasmic" evidence="1">
    <location>
        <begin position="169"/>
        <end position="174"/>
    </location>
</feature>
<feature type="transmembrane region" description="Helical" evidence="2">
    <location>
        <begin position="175"/>
        <end position="199"/>
    </location>
</feature>
<feature type="topological domain" description="Lumenal" evidence="1">
    <location>
        <begin position="200"/>
        <end position="207"/>
    </location>
</feature>
<feature type="transmembrane region" description="Helical" evidence="2">
    <location>
        <begin position="208"/>
        <end position="228"/>
    </location>
</feature>
<feature type="topological domain" description="Cytoplasmic" evidence="1">
    <location>
        <begin position="229"/>
        <end position="249"/>
    </location>
</feature>
<feature type="transmembrane region" description="Helical" evidence="2">
    <location>
        <begin position="250"/>
        <end position="270"/>
    </location>
</feature>
<feature type="topological domain" description="Lumenal" evidence="1">
    <location>
        <begin position="271"/>
        <end position="288"/>
    </location>
</feature>
<feature type="transmembrane region" description="Helical" evidence="2">
    <location>
        <begin position="289"/>
        <end position="309"/>
    </location>
</feature>
<feature type="topological domain" description="Cytoplasmic" evidence="1">
    <location>
        <begin position="310"/>
        <end position="317"/>
    </location>
</feature>
<feature type="transmembrane region" description="Helical" evidence="2">
    <location>
        <begin position="318"/>
        <end position="338"/>
    </location>
</feature>
<feature type="topological domain" description="Lumenal" evidence="1">
    <location>
        <begin position="339"/>
        <end position="341"/>
    </location>
</feature>
<feature type="transmembrane region" description="Helical" evidence="2">
    <location>
        <begin position="342"/>
        <end position="362"/>
    </location>
</feature>
<feature type="topological domain" description="Cytoplasmic" evidence="1">
    <location>
        <begin position="363"/>
        <end position="394"/>
    </location>
</feature>
<accession>Q2HA88</accession>
<keyword id="KW-0968">Cytoplasmic vesicle</keyword>
<keyword id="KW-0256">Endoplasmic reticulum</keyword>
<keyword id="KW-0333">Golgi apparatus</keyword>
<keyword id="KW-0472">Membrane</keyword>
<keyword id="KW-1185">Reference proteome</keyword>
<keyword id="KW-0762">Sugar transport</keyword>
<keyword id="KW-0812">Transmembrane</keyword>
<keyword id="KW-1133">Transmembrane helix</keyword>
<keyword id="KW-0813">Transport</keyword>
<gene>
    <name type="primary">VRG4</name>
    <name type="ORF">CHGG_02866</name>
</gene>
<organism>
    <name type="scientific">Chaetomium globosum (strain ATCC 6205 / CBS 148.51 / DSM 1962 / NBRC 6347 / NRRL 1970)</name>
    <name type="common">Soil fungus</name>
    <dbReference type="NCBI Taxonomy" id="306901"/>
    <lineage>
        <taxon>Eukaryota</taxon>
        <taxon>Fungi</taxon>
        <taxon>Dikarya</taxon>
        <taxon>Ascomycota</taxon>
        <taxon>Pezizomycotina</taxon>
        <taxon>Sordariomycetes</taxon>
        <taxon>Sordariomycetidae</taxon>
        <taxon>Sordariales</taxon>
        <taxon>Chaetomiaceae</taxon>
        <taxon>Chaetomium</taxon>
    </lineage>
</organism>
<proteinExistence type="inferred from homology"/>
<protein>
    <recommendedName>
        <fullName>GDP-mannose transporter</fullName>
        <shortName>GMT</shortName>
    </recommendedName>
</protein>
<evidence type="ECO:0000250" key="1"/>
<evidence type="ECO:0000255" key="2"/>
<evidence type="ECO:0000305" key="3"/>
<reference key="1">
    <citation type="journal article" date="2015" name="Genome Announc.">
        <title>Draft genome sequence of the cellulolytic fungus Chaetomium globosum.</title>
        <authorList>
            <person name="Cuomo C.A."/>
            <person name="Untereiner W.A."/>
            <person name="Ma L.-J."/>
            <person name="Grabherr M."/>
            <person name="Birren B.W."/>
        </authorList>
    </citation>
    <scope>NUCLEOTIDE SEQUENCE [LARGE SCALE GENOMIC DNA]</scope>
    <source>
        <strain>ATCC 6205 / CBS 148.51 / DSM 1962 / NBRC 6347 / NRRL 1970</strain>
    </source>
</reference>